<gene>
    <name evidence="1" type="primary">atpG1</name>
    <name type="ordered locus">PBPRA3605</name>
</gene>
<reference key="1">
    <citation type="journal article" date="2005" name="Science">
        <title>Life at depth: Photobacterium profundum genome sequence and expression analysis.</title>
        <authorList>
            <person name="Vezzi A."/>
            <person name="Campanaro S."/>
            <person name="D'Angelo M."/>
            <person name="Simonato F."/>
            <person name="Vitulo N."/>
            <person name="Lauro F.M."/>
            <person name="Cestaro A."/>
            <person name="Malacrida G."/>
            <person name="Simionati B."/>
            <person name="Cannata N."/>
            <person name="Romualdi C."/>
            <person name="Bartlett D.H."/>
            <person name="Valle G."/>
        </authorList>
    </citation>
    <scope>NUCLEOTIDE SEQUENCE [LARGE SCALE GENOMIC DNA]</scope>
    <source>
        <strain>ATCC BAA-1253 / SS9</strain>
    </source>
</reference>
<proteinExistence type="inferred from homology"/>
<comment type="function">
    <text evidence="1">Produces ATP from ADP in the presence of a proton gradient across the membrane. The gamma chain is believed to be important in regulating ATPase activity and the flow of protons through the CF(0) complex.</text>
</comment>
<comment type="subunit">
    <text evidence="1">F-type ATPases have 2 components, CF(1) - the catalytic core - and CF(0) - the membrane proton channel. CF(1) has five subunits: alpha(3), beta(3), gamma(1), delta(1), epsilon(1). CF(0) has three main subunits: a, b and c.</text>
</comment>
<comment type="subcellular location">
    <subcellularLocation>
        <location evidence="1">Cell inner membrane</location>
        <topology evidence="1">Peripheral membrane protein</topology>
    </subcellularLocation>
</comment>
<comment type="similarity">
    <text evidence="1">Belongs to the ATPase gamma chain family.</text>
</comment>
<sequence>MASAKEIRNKIGSVQNTQKITKAMEMVAASKMRKTQDAMESSRPYAETMRKVIGHIALGNLEYKHPYLEVREAKRVGYIIVSSDRGLCGGLNINLFKSAMTDIKGWADQGADVEMALVGAKATAFFNSYGGNVVAQVSGLGDSPTVNELIGTVGVMLKKYNEGLLDRLYLVYNQFVNTMIQEPVIDQLLPLPKSKDEEMQRNHSWDYIYEPEPKPLLDTLLVRYVESQVYQGVVENLACEQAARMVAMKSATDNAGDIINDLQLVYNKARQAAITQELSEIVSGASAV</sequence>
<keyword id="KW-0066">ATP synthesis</keyword>
<keyword id="KW-0997">Cell inner membrane</keyword>
<keyword id="KW-1003">Cell membrane</keyword>
<keyword id="KW-0139">CF(1)</keyword>
<keyword id="KW-0375">Hydrogen ion transport</keyword>
<keyword id="KW-0406">Ion transport</keyword>
<keyword id="KW-0472">Membrane</keyword>
<keyword id="KW-1185">Reference proteome</keyword>
<keyword id="KW-0813">Transport</keyword>
<protein>
    <recommendedName>
        <fullName evidence="1">ATP synthase gamma chain 1</fullName>
    </recommendedName>
    <alternativeName>
        <fullName evidence="1">ATP synthase F1 sector gamma subunit 1</fullName>
    </alternativeName>
    <alternativeName>
        <fullName evidence="1">F-ATPase gamma subunit 1</fullName>
    </alternativeName>
</protein>
<accession>Q6LLG7</accession>
<organism>
    <name type="scientific">Photobacterium profundum (strain SS9)</name>
    <dbReference type="NCBI Taxonomy" id="298386"/>
    <lineage>
        <taxon>Bacteria</taxon>
        <taxon>Pseudomonadati</taxon>
        <taxon>Pseudomonadota</taxon>
        <taxon>Gammaproteobacteria</taxon>
        <taxon>Vibrionales</taxon>
        <taxon>Vibrionaceae</taxon>
        <taxon>Photobacterium</taxon>
    </lineage>
</organism>
<name>ATPG1_PHOPR</name>
<evidence type="ECO:0000255" key="1">
    <source>
        <dbReference type="HAMAP-Rule" id="MF_00815"/>
    </source>
</evidence>
<dbReference type="EMBL" id="CR378674">
    <property type="protein sequence ID" value="CAG21861.1"/>
    <property type="molecule type" value="Genomic_DNA"/>
</dbReference>
<dbReference type="RefSeq" id="WP_011220097.1">
    <property type="nucleotide sequence ID" value="NC_006370.1"/>
</dbReference>
<dbReference type="SMR" id="Q6LLG7"/>
<dbReference type="STRING" id="298386.PBPRA3605"/>
<dbReference type="KEGG" id="ppr:PBPRA3605"/>
<dbReference type="eggNOG" id="COG0224">
    <property type="taxonomic scope" value="Bacteria"/>
</dbReference>
<dbReference type="HOGENOM" id="CLU_050669_0_1_6"/>
<dbReference type="Proteomes" id="UP000000593">
    <property type="component" value="Chromosome 1"/>
</dbReference>
<dbReference type="GO" id="GO:0005886">
    <property type="term" value="C:plasma membrane"/>
    <property type="evidence" value="ECO:0007669"/>
    <property type="project" value="UniProtKB-SubCell"/>
</dbReference>
<dbReference type="GO" id="GO:0045259">
    <property type="term" value="C:proton-transporting ATP synthase complex"/>
    <property type="evidence" value="ECO:0007669"/>
    <property type="project" value="UniProtKB-KW"/>
</dbReference>
<dbReference type="GO" id="GO:0005524">
    <property type="term" value="F:ATP binding"/>
    <property type="evidence" value="ECO:0007669"/>
    <property type="project" value="UniProtKB-UniRule"/>
</dbReference>
<dbReference type="GO" id="GO:0046933">
    <property type="term" value="F:proton-transporting ATP synthase activity, rotational mechanism"/>
    <property type="evidence" value="ECO:0007669"/>
    <property type="project" value="UniProtKB-UniRule"/>
</dbReference>
<dbReference type="GO" id="GO:0042777">
    <property type="term" value="P:proton motive force-driven plasma membrane ATP synthesis"/>
    <property type="evidence" value="ECO:0007669"/>
    <property type="project" value="UniProtKB-UniRule"/>
</dbReference>
<dbReference type="CDD" id="cd12151">
    <property type="entry name" value="F1-ATPase_gamma"/>
    <property type="match status" value="1"/>
</dbReference>
<dbReference type="FunFam" id="1.10.287.80:FF:000005">
    <property type="entry name" value="ATP synthase gamma chain"/>
    <property type="match status" value="2"/>
</dbReference>
<dbReference type="FunFam" id="3.40.1380.10:FF:000001">
    <property type="entry name" value="ATP synthase gamma chain"/>
    <property type="match status" value="1"/>
</dbReference>
<dbReference type="Gene3D" id="3.40.1380.10">
    <property type="match status" value="1"/>
</dbReference>
<dbReference type="Gene3D" id="1.10.287.80">
    <property type="entry name" value="ATP synthase, gamma subunit, helix hairpin domain"/>
    <property type="match status" value="1"/>
</dbReference>
<dbReference type="HAMAP" id="MF_00815">
    <property type="entry name" value="ATP_synth_gamma_bact"/>
    <property type="match status" value="1"/>
</dbReference>
<dbReference type="InterPro" id="IPR035968">
    <property type="entry name" value="ATP_synth_F1_ATPase_gsu"/>
</dbReference>
<dbReference type="InterPro" id="IPR000131">
    <property type="entry name" value="ATP_synth_F1_gsu"/>
</dbReference>
<dbReference type="InterPro" id="IPR023632">
    <property type="entry name" value="ATP_synth_F1_gsu_CS"/>
</dbReference>
<dbReference type="NCBIfam" id="TIGR01146">
    <property type="entry name" value="ATPsyn_F1gamma"/>
    <property type="match status" value="1"/>
</dbReference>
<dbReference type="NCBIfam" id="NF004144">
    <property type="entry name" value="PRK05621.1-1"/>
    <property type="match status" value="1"/>
</dbReference>
<dbReference type="PANTHER" id="PTHR11693">
    <property type="entry name" value="ATP SYNTHASE GAMMA CHAIN"/>
    <property type="match status" value="1"/>
</dbReference>
<dbReference type="PANTHER" id="PTHR11693:SF22">
    <property type="entry name" value="ATP SYNTHASE SUBUNIT GAMMA, MITOCHONDRIAL"/>
    <property type="match status" value="1"/>
</dbReference>
<dbReference type="Pfam" id="PF00231">
    <property type="entry name" value="ATP-synt"/>
    <property type="match status" value="1"/>
</dbReference>
<dbReference type="PRINTS" id="PR00126">
    <property type="entry name" value="ATPASEGAMMA"/>
</dbReference>
<dbReference type="SUPFAM" id="SSF52943">
    <property type="entry name" value="ATP synthase (F1-ATPase), gamma subunit"/>
    <property type="match status" value="1"/>
</dbReference>
<dbReference type="PROSITE" id="PS00153">
    <property type="entry name" value="ATPASE_GAMMA"/>
    <property type="match status" value="1"/>
</dbReference>
<feature type="chain" id="PRO_0000073337" description="ATP synthase gamma chain 1">
    <location>
        <begin position="1"/>
        <end position="288"/>
    </location>
</feature>